<name>CEBP2_CAEEL</name>
<feature type="chain" id="PRO_0000451177" description="CCAAT/enhancer-binding protein homolog 2">
    <location>
        <begin position="1"/>
        <end position="100"/>
    </location>
</feature>
<feature type="domain" description="bZIP" evidence="3">
    <location>
        <begin position="17"/>
        <end position="80"/>
    </location>
</feature>
<feature type="region of interest" description="Disordered" evidence="4">
    <location>
        <begin position="1"/>
        <end position="60"/>
    </location>
</feature>
<feature type="region of interest" description="Basic motif" evidence="3">
    <location>
        <begin position="23"/>
        <end position="48"/>
    </location>
</feature>
<feature type="region of interest" description="Leucine-zipper" evidence="3">
    <location>
        <begin position="52"/>
        <end position="73"/>
    </location>
</feature>
<feature type="region of interest" description="Disordered" evidence="4">
    <location>
        <begin position="79"/>
        <end position="100"/>
    </location>
</feature>
<feature type="coiled-coil region" evidence="2">
    <location>
        <begin position="24"/>
        <end position="83"/>
    </location>
</feature>
<feature type="compositionally biased region" description="Basic and acidic residues" evidence="4">
    <location>
        <begin position="39"/>
        <end position="60"/>
    </location>
</feature>
<feature type="compositionally biased region" description="Pro residues" evidence="4">
    <location>
        <begin position="88"/>
        <end position="100"/>
    </location>
</feature>
<feature type="mutagenesis site" description="In gk509377; low-fat phenotype. Increases expression of ech-1.1 mRNA and decreases fat-5 mRNA." evidence="5">
    <original>R</original>
    <variation>C</variation>
    <location>
        <position position="39"/>
    </location>
</feature>
<feature type="mutagenesis site" description="In gk112657; low-fat phenotype." evidence="5">
    <original>M</original>
    <variation>I</variation>
    <location>
        <position position="78"/>
    </location>
</feature>
<feature type="mutagenesis site" description="In gk112658; low-fat phenotype." evidence="5">
    <original>A</original>
    <variation>T</variation>
    <location>
        <position position="79"/>
    </location>
</feature>
<feature type="mutagenesis site" description="In gk112659; low-fat phenotype." evidence="5">
    <original>G</original>
    <variation>E</variation>
    <location>
        <position position="85"/>
    </location>
</feature>
<proteinExistence type="evidence at protein level"/>
<evidence type="ECO:0000250" key="1">
    <source>
        <dbReference type="UniProtKB" id="P53567"/>
    </source>
</evidence>
<evidence type="ECO:0000255" key="2"/>
<evidence type="ECO:0000255" key="3">
    <source>
        <dbReference type="PROSITE-ProRule" id="PRU00978"/>
    </source>
</evidence>
<evidence type="ECO:0000256" key="4">
    <source>
        <dbReference type="SAM" id="MobiDB-lite"/>
    </source>
</evidence>
<evidence type="ECO:0000269" key="5">
    <source>
    </source>
</evidence>
<evidence type="ECO:0000269" key="6">
    <source>
    </source>
</evidence>
<evidence type="ECO:0000269" key="7">
    <source>
    </source>
</evidence>
<evidence type="ECO:0000269" key="8">
    <source>
    </source>
</evidence>
<evidence type="ECO:0000303" key="9">
    <source>
    </source>
</evidence>
<evidence type="ECO:0000305" key="10"/>
<evidence type="ECO:0000312" key="11">
    <source>
        <dbReference type="Proteomes" id="UP000001940"/>
    </source>
</evidence>
<evidence type="ECO:0000312" key="12">
    <source>
        <dbReference type="WormBase" id="C48E7.11"/>
    </source>
</evidence>
<organism evidence="11">
    <name type="scientific">Caenorhabditis elegans</name>
    <dbReference type="NCBI Taxonomy" id="6239"/>
    <lineage>
        <taxon>Eukaryota</taxon>
        <taxon>Metazoa</taxon>
        <taxon>Ecdysozoa</taxon>
        <taxon>Nematoda</taxon>
        <taxon>Chromadorea</taxon>
        <taxon>Rhabditida</taxon>
        <taxon>Rhabditina</taxon>
        <taxon>Rhabditomorpha</taxon>
        <taxon>Rhabditoidea</taxon>
        <taxon>Rhabditidae</taxon>
        <taxon>Peloderinae</taxon>
        <taxon>Caenorhabditis</taxon>
    </lineage>
</organism>
<reference evidence="11" key="1">
    <citation type="journal article" date="1998" name="Science">
        <title>Genome sequence of the nematode C. elegans: a platform for investigating biology.</title>
        <authorList>
            <consortium name="The C. elegans sequencing consortium"/>
        </authorList>
    </citation>
    <scope>NUCLEOTIDE SEQUENCE [LARGE SCALE GENOMIC DNA]</scope>
    <source>
        <strain evidence="11">Bristol N2</strain>
    </source>
</reference>
<reference evidence="10" key="2">
    <citation type="journal article" date="2015" name="Biochem. Biophys. Res. Commun.">
        <title>CCAAT/enhancer-binding protein CEBP-2 controls fat consumption and fatty acid desaturation in Caenorhabditis elegans.</title>
        <authorList>
            <person name="Xu X.Y."/>
            <person name="Hu J.P."/>
            <person name="Wu M.M."/>
            <person name="Wang L.S."/>
            <person name="Fang N.Y."/>
        </authorList>
    </citation>
    <scope>FUNCTION</scope>
    <scope>DISRUPTION PHENOTYPE</scope>
    <scope>MUTAGENESIS OF ARG-39; MET-78; ALA-79 AND GLY-85</scope>
</reference>
<reference evidence="10" key="3">
    <citation type="journal article" date="2016" name="Cell Rep.">
        <title>The C. elegans CCAAT-Enhancer-Binding Protein Gamma Is Required for Surveillance Immunity.</title>
        <authorList>
            <person name="Reddy K.C."/>
            <person name="Dunbar T.L."/>
            <person name="Nargund A.M."/>
            <person name="Haynes C.M."/>
            <person name="Troemel E.R."/>
        </authorList>
    </citation>
    <scope>FUNCTION</scope>
    <scope>SUBCELLULAR LOCATION</scope>
    <scope>TISSUE SPECIFICITY</scope>
    <scope>DISRUPTION PHENOTYPE</scope>
</reference>
<reference evidence="10" key="4">
    <citation type="journal article" date="2017" name="PLoS Genet.">
        <title>A conserved mitochondrial surveillance pathway is required for defense against Pseudomonas aeruginosa.</title>
        <authorList>
            <person name="Tjahjono E."/>
            <person name="Kirienko N.V."/>
        </authorList>
    </citation>
    <scope>FUNCTION</scope>
    <scope>DISRUPTION PHENOTYPE</scope>
</reference>
<reference key="5">
    <citation type="journal article" date="2021" name="Front. Immunol.">
        <title>The bZIP Transcription Factor ZIP-11 Is Required for the Innate Immune Regulation in Caenorhabditis elegans.</title>
        <authorList>
            <person name="Zheng Z."/>
            <person name="Aihemaiti Y."/>
            <person name="Liu J."/>
            <person name="Afridi M.I."/>
            <person name="Yang S."/>
            <person name="Zhang X."/>
            <person name="Xu Y."/>
            <person name="Chen C."/>
            <person name="Tu H."/>
        </authorList>
    </citation>
    <scope>FUNCTION</scope>
    <scope>INTERACTION WITH ZIP-11</scope>
    <scope>DISRUPTION PHENOTYPE</scope>
</reference>
<comment type="function">
    <text evidence="1 5 6 7 8">Transcription factor that binds to the promoter and the enhancer regions of target genes (By similarity). Regulates expression of genes involved in fat metabolism, including ech-1.1 and fat-5 (PubMed:26505800). Has a protective role in response to infection by the Gram-negative bacterium P.aeruginosa (PubMed:26876169, PubMed:28662060, PubMed:34804026). Required for the activation of infection response gene irg-1 following P.aeruginosa infection (PubMed:26876169). Required to prevent P.aeruginosa ToxA-mediated lethality (PubMed:26876169). May also function in concert with transcription factor zip-11 to mediate immune responses, independently of the pmk-1/p38 MAPK pathway (PubMed:34804026). May act together with the bZIP transcription factor, zip-2 (PubMed:26876169).</text>
</comment>
<comment type="subunit">
    <text evidence="8">Interacts with transcription factor zip-11.</text>
</comment>
<comment type="interaction">
    <interactant intactId="EBI-2914231">
        <id>Q8IG69</id>
    </interactant>
    <interactant intactId="EBI-317743">
        <id>Q21361</id>
        <label>atf-2</label>
    </interactant>
    <organismsDiffer>false</organismsDiffer>
    <experiments>2</experiments>
</comment>
<comment type="interaction">
    <interactant intactId="EBI-2914231">
        <id>Q8IG69</id>
    </interactant>
    <interactant intactId="EBI-6749607">
        <id>Q22156</id>
        <label>atf-4</label>
    </interactant>
    <organismsDiffer>false</organismsDiffer>
    <experiments>3</experiments>
</comment>
<comment type="interaction">
    <interactant intactId="EBI-2914231">
        <id>Q8IG69</id>
    </interactant>
    <interactant intactId="EBI-6748337">
        <id>Q23272</id>
        <label>atfs-1</label>
    </interactant>
    <organismsDiffer>false</organismsDiffer>
    <experiments>2</experiments>
</comment>
<comment type="interaction">
    <interactant intactId="EBI-2914231">
        <id>Q8IG69</id>
    </interactant>
    <interactant intactId="EBI-328155">
        <id>Q94126</id>
        <label>ces-2</label>
    </interactant>
    <organismsDiffer>false</organismsDiffer>
    <experiments>3</experiments>
</comment>
<comment type="interaction">
    <interactant intactId="EBI-2914231">
        <id>Q8IG69</id>
    </interactant>
    <interactant intactId="EBI-6740132">
        <id>Q9N5A8</id>
        <label>zip-11</label>
    </interactant>
    <organismsDiffer>false</organismsDiffer>
    <experiments>3</experiments>
</comment>
<comment type="interaction">
    <interactant intactId="EBI-2914231">
        <id>Q8IG69</id>
    </interactant>
    <interactant intactId="EBI-6731556">
        <id>Q21148</id>
        <label>zip-2</label>
    </interactant>
    <organismsDiffer>false</organismsDiffer>
    <experiments>3</experiments>
</comment>
<comment type="interaction">
    <interactant intactId="EBI-2914231">
        <id>Q8IG69</id>
    </interactant>
    <interactant intactId="EBI-322774">
        <id>Q9XUK2</id>
        <label>zip-3</label>
    </interactant>
    <organismsDiffer>false</organismsDiffer>
    <experiments>3</experiments>
</comment>
<comment type="interaction">
    <interactant intactId="EBI-2914231">
        <id>Q8IG69</id>
    </interactant>
    <interactant intactId="EBI-26597024">
        <id>A0A1I6CMA8</id>
        <label>zip-9</label>
    </interactant>
    <organismsDiffer>false</organismsDiffer>
    <experiments>2</experiments>
</comment>
<comment type="subcellular location">
    <subcellularLocation>
        <location evidence="6">Nucleus</location>
    </subcellularLocation>
</comment>
<comment type="tissue specificity">
    <text evidence="6">Expressed broadly in somatic tissues including the intestine.</text>
</comment>
<comment type="disruption phenotype">
    <text evidence="5 6 7 8">RNAi-mediated knockdown reduces overall fat content (PubMed:26505800). Decreases survival upon infection with P.aeruginosa (PubMed:26876169, PubMed:28662060). Reduces induction of expression of infection response gene, irg-1, in response to P.aeruginosa (PubMed:26876169). The decrease in survival upon P.aeruginosa infection on a zip-11 mutant background is abolished by RNAi-mediated knockdown of cebp-2.</text>
</comment>
<comment type="similarity">
    <text evidence="10">Belongs to the bZIP family. C/EBP subfamily.</text>
</comment>
<gene>
    <name evidence="12" type="primary">cebp-2</name>
    <name evidence="12" type="ORF">C48E7.11</name>
</gene>
<keyword id="KW-0175">Coiled coil</keyword>
<keyword id="KW-0238">DNA-binding</keyword>
<keyword id="KW-0391">Immunity</keyword>
<keyword id="KW-0399">Innate immunity</keyword>
<keyword id="KW-0539">Nucleus</keyword>
<keyword id="KW-1185">Reference proteome</keyword>
<keyword id="KW-0804">Transcription</keyword>
<keyword id="KW-0805">Transcription regulation</keyword>
<dbReference type="EMBL" id="BX284601">
    <property type="protein sequence ID" value="CCD64211.1"/>
    <property type="molecule type" value="Genomic_DNA"/>
</dbReference>
<dbReference type="RefSeq" id="NP_871835.1">
    <property type="nucleotide sequence ID" value="NM_182035.6"/>
</dbReference>
<dbReference type="SMR" id="Q8IG69"/>
<dbReference type="FunCoup" id="Q8IG69">
    <property type="interactions" value="1643"/>
</dbReference>
<dbReference type="IntAct" id="Q8IG69">
    <property type="interactions" value="14"/>
</dbReference>
<dbReference type="STRING" id="6239.C48E7.11.2"/>
<dbReference type="PaxDb" id="6239-C48E7.11"/>
<dbReference type="PeptideAtlas" id="Q8IG69"/>
<dbReference type="EnsemblMetazoa" id="C48E7.11.1">
    <property type="protein sequence ID" value="C48E7.11.1"/>
    <property type="gene ID" value="WBGene00016754"/>
</dbReference>
<dbReference type="GeneID" id="172319"/>
<dbReference type="KEGG" id="cel:CELE_C48E7.11"/>
<dbReference type="UCSC" id="C48E7.11">
    <property type="organism name" value="c. elegans"/>
</dbReference>
<dbReference type="AGR" id="WB:WBGene00016754"/>
<dbReference type="CTD" id="172319"/>
<dbReference type="WormBase" id="C48E7.11">
    <property type="protein sequence ID" value="CE32167"/>
    <property type="gene ID" value="WBGene00016754"/>
    <property type="gene designation" value="cebp-2"/>
</dbReference>
<dbReference type="eggNOG" id="KOG3119">
    <property type="taxonomic scope" value="Eukaryota"/>
</dbReference>
<dbReference type="HOGENOM" id="CLU_2348671_0_0_1"/>
<dbReference type="InParanoid" id="Q8IG69"/>
<dbReference type="OMA" id="MAYAKND"/>
<dbReference type="OrthoDB" id="10039716at2759"/>
<dbReference type="PhylomeDB" id="Q8IG69"/>
<dbReference type="SignaLink" id="Q8IG69"/>
<dbReference type="PRO" id="PR:Q8IG69"/>
<dbReference type="Proteomes" id="UP000001940">
    <property type="component" value="Chromosome I"/>
</dbReference>
<dbReference type="Bgee" id="WBGene00016754">
    <property type="expression patterns" value="Expressed in embryo and 3 other cell types or tissues"/>
</dbReference>
<dbReference type="GO" id="GO:0005634">
    <property type="term" value="C:nucleus"/>
    <property type="evidence" value="ECO:0000314"/>
    <property type="project" value="UniProtKB"/>
</dbReference>
<dbReference type="GO" id="GO:0000981">
    <property type="term" value="F:DNA-binding transcription factor activity, RNA polymerase II-specific"/>
    <property type="evidence" value="ECO:0000318"/>
    <property type="project" value="GO_Central"/>
</dbReference>
<dbReference type="GO" id="GO:0000978">
    <property type="term" value="F:RNA polymerase II cis-regulatory region sequence-specific DNA binding"/>
    <property type="evidence" value="ECO:0000318"/>
    <property type="project" value="GO_Central"/>
</dbReference>
<dbReference type="GO" id="GO:0050829">
    <property type="term" value="P:defense response to Gram-negative bacterium"/>
    <property type="evidence" value="ECO:0000315"/>
    <property type="project" value="UniProtKB"/>
</dbReference>
<dbReference type="GO" id="GO:0006351">
    <property type="term" value="P:DNA-templated transcription"/>
    <property type="evidence" value="ECO:0007669"/>
    <property type="project" value="InterPro"/>
</dbReference>
<dbReference type="GO" id="GO:0045087">
    <property type="term" value="P:innate immune response"/>
    <property type="evidence" value="ECO:0007669"/>
    <property type="project" value="UniProtKB-KW"/>
</dbReference>
<dbReference type="GO" id="GO:0019216">
    <property type="term" value="P:regulation of lipid metabolic process"/>
    <property type="evidence" value="ECO:0000315"/>
    <property type="project" value="WormBase"/>
</dbReference>
<dbReference type="GO" id="GO:0006357">
    <property type="term" value="P:regulation of transcription by RNA polymerase II"/>
    <property type="evidence" value="ECO:0000315"/>
    <property type="project" value="WormBase"/>
</dbReference>
<dbReference type="CDD" id="cd14693">
    <property type="entry name" value="bZIP_CEBP"/>
    <property type="match status" value="1"/>
</dbReference>
<dbReference type="FunFam" id="1.20.5.170:FF:000160">
    <property type="entry name" value="C/EBP (CCAAT/enhancer-binding protein) homolog"/>
    <property type="match status" value="1"/>
</dbReference>
<dbReference type="Gene3D" id="1.20.5.170">
    <property type="match status" value="1"/>
</dbReference>
<dbReference type="InterPro" id="IPR004827">
    <property type="entry name" value="bZIP"/>
</dbReference>
<dbReference type="InterPro" id="IPR046347">
    <property type="entry name" value="bZIP_sf"/>
</dbReference>
<dbReference type="InterPro" id="IPR031106">
    <property type="entry name" value="C/EBP"/>
</dbReference>
<dbReference type="PANTHER" id="PTHR23334">
    <property type="entry name" value="CCAAT/ENHANCER BINDING PROTEIN"/>
    <property type="match status" value="1"/>
</dbReference>
<dbReference type="PANTHER" id="PTHR23334:SF69">
    <property type="entry name" value="CCAAT_ENHANCER-BINDING PROTEIN GAMMA"/>
    <property type="match status" value="1"/>
</dbReference>
<dbReference type="Pfam" id="PF07716">
    <property type="entry name" value="bZIP_2"/>
    <property type="match status" value="1"/>
</dbReference>
<dbReference type="SMART" id="SM00338">
    <property type="entry name" value="BRLZ"/>
    <property type="match status" value="1"/>
</dbReference>
<dbReference type="SUPFAM" id="SSF57959">
    <property type="entry name" value="Leucine zipper domain"/>
    <property type="match status" value="1"/>
</dbReference>
<dbReference type="PROSITE" id="PS50217">
    <property type="entry name" value="BZIP"/>
    <property type="match status" value="1"/>
</dbReference>
<accession>Q8IG69</accession>
<protein>
    <recommendedName>
        <fullName evidence="9">CCAAT/enhancer-binding protein homolog 2</fullName>
    </recommendedName>
</protein>
<sequence length="100" mass="11625">MSGNRKRNTSEPREDDEDDYSTKRKRNNEAVNRTRQKKRQEENDTAEKVDELKKENETLERKVEQLQKELSFLKEMFMAYAKNDGNDGPPPPPPPSSSAV</sequence>